<organism>
    <name type="scientific">Homo sapiens</name>
    <name type="common">Human</name>
    <dbReference type="NCBI Taxonomy" id="9606"/>
    <lineage>
        <taxon>Eukaryota</taxon>
        <taxon>Metazoa</taxon>
        <taxon>Chordata</taxon>
        <taxon>Craniata</taxon>
        <taxon>Vertebrata</taxon>
        <taxon>Euteleostomi</taxon>
        <taxon>Mammalia</taxon>
        <taxon>Eutheria</taxon>
        <taxon>Euarchontoglires</taxon>
        <taxon>Primates</taxon>
        <taxon>Haplorrhini</taxon>
        <taxon>Catarrhini</taxon>
        <taxon>Hominidae</taxon>
        <taxon>Homo</taxon>
    </lineage>
</organism>
<keyword id="KW-0025">Alternative splicing</keyword>
<keyword id="KW-0963">Cytoplasm</keyword>
<keyword id="KW-0256">Endoplasmic reticulum</keyword>
<keyword id="KW-0333">Golgi apparatus</keyword>
<keyword id="KW-0378">Hydrolase</keyword>
<keyword id="KW-0443">Lipid metabolism</keyword>
<keyword id="KW-0472">Membrane</keyword>
<keyword id="KW-1185">Reference proteome</keyword>
<keyword id="KW-0812">Transmembrane</keyword>
<keyword id="KW-1133">Transmembrane helix</keyword>
<proteinExistence type="evidence at protein level"/>
<sequence length="522" mass="61112">MNESPQTNEFKGTTEEAPAKESPHTSEFKGAALVSPISKSMLERLSKFEVEDAENVASYDSKIKKIVHSIVSSFAFGIFGVFLVLLDVTLLLADLIFTDSKLYIPLEYRSISLAIGLFFLMDVLLRVFVEGRQQYFSDLFNILDTAIIVIPLLVDVIYIFFDIKLLRNIPRWTHLVRLLRLIILIRIFHLLHQKRQLEKLMRRLVSENKRRYTRDGFDLDLTYVTERIIAMSFPSSGRQSFYRNPIEEVVRFLDKKHRNHYRVYNLCSERAYDPKHFHNRVSRIMIDDHNVPTLHEMVVFTKEVNEWMAQDLENIVAIHCKGGKGRTGTMVCALLIASEIFLTAEESLYYFGERRTNKTHSNKFQGVETPSQNRYVGYFAQVKHLYNWNLPPRRILFIKRFIIYSIRGDVCDLKVQVVMEKKVVFSSTSLGNCSILHDIETDKILINVYDGPPLYDDVKVQFFSSNLPKYYDNCPFFFWFNTSFIQNNRLCLPRNELDNPHKQKAWKIYPPEFAVEILFGEK</sequence>
<accession>Q6XPS3</accession>
<accession>A1A4X0</accession>
<accession>A1A4X1</accession>
<accession>A8MX64</accession>
<accession>B1AQ16</accession>
<accession>B4DWZ2</accession>
<accession>Q5VUH2</accession>
<accession>Q8WWL4</accession>
<accession>Q8WWL5</accession>
<evidence type="ECO:0000255" key="1"/>
<evidence type="ECO:0000255" key="2">
    <source>
        <dbReference type="PROSITE-ProRule" id="PRU00589"/>
    </source>
</evidence>
<evidence type="ECO:0000255" key="3">
    <source>
        <dbReference type="PROSITE-ProRule" id="PRU00590"/>
    </source>
</evidence>
<evidence type="ECO:0000256" key="4">
    <source>
        <dbReference type="SAM" id="MobiDB-lite"/>
    </source>
</evidence>
<evidence type="ECO:0000269" key="5">
    <source>
    </source>
</evidence>
<evidence type="ECO:0000269" key="6">
    <source>
    </source>
</evidence>
<evidence type="ECO:0000269" key="7">
    <source>
    </source>
</evidence>
<evidence type="ECO:0000269" key="8">
    <source>
    </source>
</evidence>
<evidence type="ECO:0000269" key="9">
    <source>
    </source>
</evidence>
<evidence type="ECO:0000303" key="10">
    <source>
    </source>
</evidence>
<evidence type="ECO:0000303" key="11">
    <source>
    </source>
</evidence>
<evidence type="ECO:0000303" key="12">
    <source>
    </source>
</evidence>
<evidence type="ECO:0000303" key="13">
    <source>
    </source>
</evidence>
<evidence type="ECO:0000305" key="14"/>
<evidence type="ECO:0000305" key="15">
    <source>
    </source>
</evidence>
<reference key="1">
    <citation type="journal article" date="2001" name="Biochem. J.">
        <title>TPIP: a novel phosphoinositide 3-phosphatase.</title>
        <authorList>
            <person name="Walker S.M."/>
            <person name="Downes C.P."/>
            <person name="Leslie N.R."/>
        </authorList>
    </citation>
    <scope>NUCLEOTIDE SEQUENCE [MRNA] (ISOFORMS 3 AND 4)</scope>
    <scope>TISSUE SPECIFICITY</scope>
    <scope>SUBCELLULAR LOCATION</scope>
    <scope>MUTAGENESIS OF CYS-320</scope>
    <scope>CATALYTIC ACTIVITY</scope>
    <scope>FUNCTION</scope>
    <source>
        <tissue>Testis</tissue>
    </source>
</reference>
<reference key="2">
    <citation type="journal article" date="2003" name="Gene">
        <title>The TPTE gene family: cellular expression, subcellular localization and alternative splicing.</title>
        <authorList>
            <person name="Tapparel C."/>
            <person name="Reymond A."/>
            <person name="Girardet C."/>
            <person name="Guillou L."/>
            <person name="Lyle R."/>
            <person name="Lamon C."/>
            <person name="Hutter P."/>
            <person name="Antonarakis S.E."/>
        </authorList>
    </citation>
    <scope>NUCLEOTIDE SEQUENCE [MRNA] (ISOFORM 1)</scope>
    <scope>VARIANT VAL-444</scope>
    <scope>SUBCELLULAR LOCATION</scope>
</reference>
<reference key="3">
    <citation type="journal article" date="2004" name="Nat. Genet.">
        <title>Complete sequencing and characterization of 21,243 full-length human cDNAs.</title>
        <authorList>
            <person name="Ota T."/>
            <person name="Suzuki Y."/>
            <person name="Nishikawa T."/>
            <person name="Otsuki T."/>
            <person name="Sugiyama T."/>
            <person name="Irie R."/>
            <person name="Wakamatsu A."/>
            <person name="Hayashi K."/>
            <person name="Sato H."/>
            <person name="Nagai K."/>
            <person name="Kimura K."/>
            <person name="Makita H."/>
            <person name="Sekine M."/>
            <person name="Obayashi M."/>
            <person name="Nishi T."/>
            <person name="Shibahara T."/>
            <person name="Tanaka T."/>
            <person name="Ishii S."/>
            <person name="Yamamoto J."/>
            <person name="Saito K."/>
            <person name="Kawai Y."/>
            <person name="Isono Y."/>
            <person name="Nakamura Y."/>
            <person name="Nagahari K."/>
            <person name="Murakami K."/>
            <person name="Yasuda T."/>
            <person name="Iwayanagi T."/>
            <person name="Wagatsuma M."/>
            <person name="Shiratori A."/>
            <person name="Sudo H."/>
            <person name="Hosoiri T."/>
            <person name="Kaku Y."/>
            <person name="Kodaira H."/>
            <person name="Kondo H."/>
            <person name="Sugawara M."/>
            <person name="Takahashi M."/>
            <person name="Kanda K."/>
            <person name="Yokoi T."/>
            <person name="Furuya T."/>
            <person name="Kikkawa E."/>
            <person name="Omura Y."/>
            <person name="Abe K."/>
            <person name="Kamihara K."/>
            <person name="Katsuta N."/>
            <person name="Sato K."/>
            <person name="Tanikawa M."/>
            <person name="Yamazaki M."/>
            <person name="Ninomiya K."/>
            <person name="Ishibashi T."/>
            <person name="Yamashita H."/>
            <person name="Murakawa K."/>
            <person name="Fujimori K."/>
            <person name="Tanai H."/>
            <person name="Kimata M."/>
            <person name="Watanabe M."/>
            <person name="Hiraoka S."/>
            <person name="Chiba Y."/>
            <person name="Ishida S."/>
            <person name="Ono Y."/>
            <person name="Takiguchi S."/>
            <person name="Watanabe S."/>
            <person name="Yosida M."/>
            <person name="Hotuta T."/>
            <person name="Kusano J."/>
            <person name="Kanehori K."/>
            <person name="Takahashi-Fujii A."/>
            <person name="Hara H."/>
            <person name="Tanase T.-O."/>
            <person name="Nomura Y."/>
            <person name="Togiya S."/>
            <person name="Komai F."/>
            <person name="Hara R."/>
            <person name="Takeuchi K."/>
            <person name="Arita M."/>
            <person name="Imose N."/>
            <person name="Musashino K."/>
            <person name="Yuuki H."/>
            <person name="Oshima A."/>
            <person name="Sasaki N."/>
            <person name="Aotsuka S."/>
            <person name="Yoshikawa Y."/>
            <person name="Matsunawa H."/>
            <person name="Ichihara T."/>
            <person name="Shiohata N."/>
            <person name="Sano S."/>
            <person name="Moriya S."/>
            <person name="Momiyama H."/>
            <person name="Satoh N."/>
            <person name="Takami S."/>
            <person name="Terashima Y."/>
            <person name="Suzuki O."/>
            <person name="Nakagawa S."/>
            <person name="Senoh A."/>
            <person name="Mizoguchi H."/>
            <person name="Goto Y."/>
            <person name="Shimizu F."/>
            <person name="Wakebe H."/>
            <person name="Hishigaki H."/>
            <person name="Watanabe T."/>
            <person name="Sugiyama A."/>
            <person name="Takemoto M."/>
            <person name="Kawakami B."/>
            <person name="Yamazaki M."/>
            <person name="Watanabe K."/>
            <person name="Kumagai A."/>
            <person name="Itakura S."/>
            <person name="Fukuzumi Y."/>
            <person name="Fujimori Y."/>
            <person name="Komiyama M."/>
            <person name="Tashiro H."/>
            <person name="Tanigami A."/>
            <person name="Fujiwara T."/>
            <person name="Ono T."/>
            <person name="Yamada K."/>
            <person name="Fujii Y."/>
            <person name="Ozaki K."/>
            <person name="Hirao M."/>
            <person name="Ohmori Y."/>
            <person name="Kawabata A."/>
            <person name="Hikiji T."/>
            <person name="Kobatake N."/>
            <person name="Inagaki H."/>
            <person name="Ikema Y."/>
            <person name="Okamoto S."/>
            <person name="Okitani R."/>
            <person name="Kawakami T."/>
            <person name="Noguchi S."/>
            <person name="Itoh T."/>
            <person name="Shigeta K."/>
            <person name="Senba T."/>
            <person name="Matsumura K."/>
            <person name="Nakajima Y."/>
            <person name="Mizuno T."/>
            <person name="Morinaga M."/>
            <person name="Sasaki M."/>
            <person name="Togashi T."/>
            <person name="Oyama M."/>
            <person name="Hata H."/>
            <person name="Watanabe M."/>
            <person name="Komatsu T."/>
            <person name="Mizushima-Sugano J."/>
            <person name="Satoh T."/>
            <person name="Shirai Y."/>
            <person name="Takahashi Y."/>
            <person name="Nakagawa K."/>
            <person name="Okumura K."/>
            <person name="Nagase T."/>
            <person name="Nomura N."/>
            <person name="Kikuchi H."/>
            <person name="Masuho Y."/>
            <person name="Yamashita R."/>
            <person name="Nakai K."/>
            <person name="Yada T."/>
            <person name="Nakamura Y."/>
            <person name="Ohara O."/>
            <person name="Isogai T."/>
            <person name="Sugano S."/>
        </authorList>
    </citation>
    <scope>NUCLEOTIDE SEQUENCE [LARGE SCALE MRNA] (ISOFORM 7)</scope>
    <scope>VARIANT VAL-444</scope>
    <source>
        <tissue>Testis</tissue>
    </source>
</reference>
<reference key="4">
    <citation type="journal article" date="2011" name="PLoS ONE">
        <title>A novel human TPIP splice-variant (TPIP-C2) mRNA, expressed in human and mouse tissues, strongly inhibits cell growth in HeLa cells.</title>
        <authorList>
            <person name="Mishra R.R."/>
            <person name="Chaudhary J.K."/>
            <person name="Bajaj G.D."/>
            <person name="Rath P.C."/>
        </authorList>
    </citation>
    <scope>NUCLEOTIDE SEQUENCE [MRNA] (ISOFORM 6)</scope>
    <scope>VARIANT VAL-444</scope>
</reference>
<reference key="5">
    <citation type="journal article" date="2004" name="Nature">
        <title>The DNA sequence and analysis of human chromosome 13.</title>
        <authorList>
            <person name="Dunham A."/>
            <person name="Matthews L.H."/>
            <person name="Burton J."/>
            <person name="Ashurst J.L."/>
            <person name="Howe K.L."/>
            <person name="Ashcroft K.J."/>
            <person name="Beare D.M."/>
            <person name="Burford D.C."/>
            <person name="Hunt S.E."/>
            <person name="Griffiths-Jones S."/>
            <person name="Jones M.C."/>
            <person name="Keenan S.J."/>
            <person name="Oliver K."/>
            <person name="Scott C.E."/>
            <person name="Ainscough R."/>
            <person name="Almeida J.P."/>
            <person name="Ambrose K.D."/>
            <person name="Andrews D.T."/>
            <person name="Ashwell R.I.S."/>
            <person name="Babbage A.K."/>
            <person name="Bagguley C.L."/>
            <person name="Bailey J."/>
            <person name="Bannerjee R."/>
            <person name="Barlow K.F."/>
            <person name="Bates K."/>
            <person name="Beasley H."/>
            <person name="Bird C.P."/>
            <person name="Bray-Allen S."/>
            <person name="Brown A.J."/>
            <person name="Brown J.Y."/>
            <person name="Burrill W."/>
            <person name="Carder C."/>
            <person name="Carter N.P."/>
            <person name="Chapman J.C."/>
            <person name="Clamp M.E."/>
            <person name="Clark S.Y."/>
            <person name="Clarke G."/>
            <person name="Clee C.M."/>
            <person name="Clegg S.C."/>
            <person name="Cobley V."/>
            <person name="Collins J.E."/>
            <person name="Corby N."/>
            <person name="Coville G.J."/>
            <person name="Deloukas P."/>
            <person name="Dhami P."/>
            <person name="Dunham I."/>
            <person name="Dunn M."/>
            <person name="Earthrowl M.E."/>
            <person name="Ellington A.G."/>
            <person name="Faulkner L."/>
            <person name="Frankish A.G."/>
            <person name="Frankland J."/>
            <person name="French L."/>
            <person name="Garner P."/>
            <person name="Garnett J."/>
            <person name="Gilbert J.G.R."/>
            <person name="Gilson C.J."/>
            <person name="Ghori J."/>
            <person name="Grafham D.V."/>
            <person name="Gribble S.M."/>
            <person name="Griffiths C."/>
            <person name="Hall R.E."/>
            <person name="Hammond S."/>
            <person name="Harley J.L."/>
            <person name="Hart E.A."/>
            <person name="Heath P.D."/>
            <person name="Howden P.J."/>
            <person name="Huckle E.J."/>
            <person name="Hunt P.J."/>
            <person name="Hunt A.R."/>
            <person name="Johnson C."/>
            <person name="Johnson D."/>
            <person name="Kay M."/>
            <person name="Kimberley A.M."/>
            <person name="King A."/>
            <person name="Laird G.K."/>
            <person name="Langford C.J."/>
            <person name="Lawlor S."/>
            <person name="Leongamornlert D.A."/>
            <person name="Lloyd D.M."/>
            <person name="Lloyd C."/>
            <person name="Loveland J.E."/>
            <person name="Lovell J."/>
            <person name="Martin S."/>
            <person name="Mashreghi-Mohammadi M."/>
            <person name="McLaren S.J."/>
            <person name="McMurray A."/>
            <person name="Milne S."/>
            <person name="Moore M.J.F."/>
            <person name="Nickerson T."/>
            <person name="Palmer S.A."/>
            <person name="Pearce A.V."/>
            <person name="Peck A.I."/>
            <person name="Pelan S."/>
            <person name="Phillimore B."/>
            <person name="Porter K.M."/>
            <person name="Rice C.M."/>
            <person name="Searle S."/>
            <person name="Sehra H.K."/>
            <person name="Shownkeen R."/>
            <person name="Skuce C.D."/>
            <person name="Smith M."/>
            <person name="Steward C.A."/>
            <person name="Sycamore N."/>
            <person name="Tester J."/>
            <person name="Thomas D.W."/>
            <person name="Tracey A."/>
            <person name="Tromans A."/>
            <person name="Tubby B."/>
            <person name="Wall M."/>
            <person name="Wallis J.M."/>
            <person name="West A.P."/>
            <person name="Whitehead S.L."/>
            <person name="Willey D.L."/>
            <person name="Wilming L."/>
            <person name="Wray P.W."/>
            <person name="Wright M.W."/>
            <person name="Young L."/>
            <person name="Coulson A."/>
            <person name="Durbin R.M."/>
            <person name="Hubbard T."/>
            <person name="Sulston J.E."/>
            <person name="Beck S."/>
            <person name="Bentley D.R."/>
            <person name="Rogers J."/>
            <person name="Ross M.T."/>
        </authorList>
    </citation>
    <scope>NUCLEOTIDE SEQUENCE [LARGE SCALE GENOMIC DNA]</scope>
</reference>
<reference key="6">
    <citation type="submission" date="2005-07" db="EMBL/GenBank/DDBJ databases">
        <authorList>
            <person name="Mural R.J."/>
            <person name="Istrail S."/>
            <person name="Sutton G.G."/>
            <person name="Florea L."/>
            <person name="Halpern A.L."/>
            <person name="Mobarry C.M."/>
            <person name="Lippert R."/>
            <person name="Walenz B."/>
            <person name="Shatkay H."/>
            <person name="Dew I."/>
            <person name="Miller J.R."/>
            <person name="Flanigan M.J."/>
            <person name="Edwards N.J."/>
            <person name="Bolanos R."/>
            <person name="Fasulo D."/>
            <person name="Halldorsson B.V."/>
            <person name="Hannenhalli S."/>
            <person name="Turner R."/>
            <person name="Yooseph S."/>
            <person name="Lu F."/>
            <person name="Nusskern D.R."/>
            <person name="Shue B.C."/>
            <person name="Zheng X.H."/>
            <person name="Zhong F."/>
            <person name="Delcher A.L."/>
            <person name="Huson D.H."/>
            <person name="Kravitz S.A."/>
            <person name="Mouchard L."/>
            <person name="Reinert K."/>
            <person name="Remington K.A."/>
            <person name="Clark A.G."/>
            <person name="Waterman M.S."/>
            <person name="Eichler E.E."/>
            <person name="Adams M.D."/>
            <person name="Hunkapiller M.W."/>
            <person name="Myers E.W."/>
            <person name="Venter J.C."/>
        </authorList>
    </citation>
    <scope>NUCLEOTIDE SEQUENCE [LARGE SCALE GENOMIC DNA]</scope>
</reference>
<reference key="7">
    <citation type="journal article" date="2004" name="Genome Res.">
        <title>The status, quality, and expansion of the NIH full-length cDNA project: the Mammalian Gene Collection (MGC).</title>
        <authorList>
            <consortium name="The MGC Project Team"/>
        </authorList>
    </citation>
    <scope>NUCLEOTIDE SEQUENCE [LARGE SCALE MRNA] (ISOFORMS 5 AND 6)</scope>
    <scope>VARIANT VAL-444</scope>
</reference>
<gene>
    <name type="primary">TPTE2</name>
    <name evidence="10" type="synonym">TPIP</name>
</gene>
<protein>
    <recommendedName>
        <fullName>Phosphatidylinositol 3,4,5-trisphosphate 3-phosphatase TPTE2</fullName>
        <ecNumber evidence="5">3.1.3.67</ecNumber>
    </recommendedName>
    <alternativeName>
        <fullName>Lipid phosphatase TPIP</fullName>
    </alternativeName>
    <alternativeName>
        <fullName evidence="10">TPTE and PTEN homologous inositol lipid phosphatase</fullName>
    </alternativeName>
</protein>
<feature type="chain" id="PRO_0000224187" description="Phosphatidylinositol 3,4,5-trisphosphate 3-phosphatase TPTE2">
    <location>
        <begin position="1"/>
        <end position="522"/>
    </location>
</feature>
<feature type="transmembrane region" description="Helical" evidence="1">
    <location>
        <begin position="66"/>
        <end position="86"/>
    </location>
</feature>
<feature type="transmembrane region" description="Helical" evidence="1">
    <location>
        <begin position="111"/>
        <end position="131"/>
    </location>
</feature>
<feature type="transmembrane region" description="Helical" evidence="1">
    <location>
        <begin position="146"/>
        <end position="166"/>
    </location>
</feature>
<feature type="domain" description="Phosphatase tensin-type" evidence="3">
    <location>
        <begin position="210"/>
        <end position="386"/>
    </location>
</feature>
<feature type="domain" description="C2 tensin-type" evidence="2">
    <location>
        <begin position="393"/>
        <end position="522"/>
    </location>
</feature>
<feature type="region of interest" description="Disordered" evidence="4">
    <location>
        <begin position="1"/>
        <end position="28"/>
    </location>
</feature>
<feature type="compositionally biased region" description="Polar residues" evidence="4">
    <location>
        <begin position="1"/>
        <end position="11"/>
    </location>
</feature>
<feature type="compositionally biased region" description="Basic and acidic residues" evidence="4">
    <location>
        <begin position="12"/>
        <end position="27"/>
    </location>
</feature>
<feature type="active site" description="Phosphocysteine intermediate" evidence="14">
    <location>
        <position position="320"/>
    </location>
</feature>
<feature type="splice variant" id="VSP_047569" description="In isoform 6." evidence="12 13">
    <location>
        <begin position="1"/>
        <end position="329"/>
    </location>
</feature>
<feature type="splice variant" id="VSP_017322" description="In isoform 4." evidence="10">
    <location>
        <begin position="40"/>
        <end position="170"/>
    </location>
</feature>
<feature type="splice variant" id="VSP_017323" description="In isoform 3." evidence="10">
    <original>SMLERLSKFEVEDAENVASYDSKIKKIVHSIVSSFAFG</original>
    <variation>R</variation>
    <location>
        <begin position="40"/>
        <end position="77"/>
    </location>
</feature>
<feature type="splice variant" id="VSP_044506" description="In isoform 5." evidence="12">
    <original>DSKIKKIVHSIVSSFAFGIFGVFLVLLDVTLLLADLIFTDSKLYIPLEYRSISLAIGLFFLMDVLLRVFVEGRQQYFSDLFNILDTAIIVIPLLVDVIYIFFDIKLLRNIPR</original>
    <variation>E</variation>
    <location>
        <begin position="60"/>
        <end position="171"/>
    </location>
</feature>
<feature type="splice variant" id="VSP_017324" description="In isoform 2 and isoform 3." evidence="10">
    <location>
        <begin position="132"/>
        <end position="171"/>
    </location>
</feature>
<feature type="splice variant" id="VSP_017325" description="In isoform 4." evidence="10">
    <original>ILHDIETDKILINVYDGPPLYDDVKVQFFSSNLPKYYDNCPFFFWFNTSFIQNNRLCLPRNELDNPHKQKAWKIYPPEFAVEILFGEK</original>
    <variation>REEGSTLRRANWKGEPSRRPVLD</variation>
    <location>
        <begin position="435"/>
        <end position="522"/>
    </location>
</feature>
<feature type="splice variant" id="VSP_053978" description="In isoform 7." evidence="11">
    <original>NLPKYYDNCPFFFWFNTSFIQNNRLCLPRNELDNPHKQKAWKIYPPEFAVEILFGEK</original>
    <variation>REEGSTLRRANWKGEPSRRPVLD</variation>
    <location>
        <begin position="466"/>
        <end position="522"/>
    </location>
</feature>
<feature type="sequence variant" id="VAR_047501" description="In dbSNP:rs2497218.">
    <original>V</original>
    <variation>I</variation>
    <location>
        <position position="367"/>
    </location>
</feature>
<feature type="sequence variant" id="VAR_057349" description="In dbSNP:rs2497218." evidence="6 7 8 9">
    <original>I</original>
    <variation>V</variation>
    <location>
        <position position="444"/>
    </location>
</feature>
<feature type="mutagenesis site" description="Loss of activity." evidence="5">
    <original>C</original>
    <variation>S</variation>
    <location>
        <position position="320"/>
    </location>
</feature>
<feature type="sequence conflict" description="In Ref. 1; CAD13144 and 2; AAP45146." evidence="14" ref="1 2">
    <original>E</original>
    <variation>K</variation>
    <location>
        <position position="521"/>
    </location>
</feature>
<comment type="function">
    <text evidence="5">Acts as a lipid phosphatase, removing the phosphate in the D3 position of the inositol ring from phosphatidylinositol 3,4,5-trisphosphate.</text>
</comment>
<comment type="function">
    <molecule>Isoform 4</molecule>
    <text evidence="5">Shows no phosphoinositide phosphatase activity.</text>
</comment>
<comment type="catalytic activity">
    <reaction evidence="5">
        <text>a 1,2-diacyl-sn-glycero-3-phospho-(1D-myo-inositol-3,4,5-trisphosphate) + H2O = a 1,2-diacyl-sn-glycero-3-phospho-(1D-myo-inositol-4,5-bisphosphate) + phosphate</text>
        <dbReference type="Rhea" id="RHEA:25017"/>
        <dbReference type="ChEBI" id="CHEBI:15377"/>
        <dbReference type="ChEBI" id="CHEBI:43474"/>
        <dbReference type="ChEBI" id="CHEBI:57836"/>
        <dbReference type="ChEBI" id="CHEBI:58456"/>
        <dbReference type="EC" id="3.1.3.67"/>
    </reaction>
    <physiologicalReaction direction="left-to-right" evidence="15">
        <dbReference type="Rhea" id="RHEA:25018"/>
    </physiologicalReaction>
</comment>
<comment type="subcellular location">
    <molecule>Isoform 3</molecule>
    <subcellularLocation>
        <location evidence="5">Endoplasmic reticulum membrane</location>
        <topology evidence="1">Multi-pass membrane protein</topology>
    </subcellularLocation>
</comment>
<comment type="subcellular location">
    <molecule>Isoform 1</molecule>
    <subcellularLocation>
        <location evidence="6">Endoplasmic reticulum membrane</location>
        <topology evidence="1">Multi-pass membrane protein</topology>
    </subcellularLocation>
    <subcellularLocation>
        <location evidence="6">Golgi apparatus membrane</location>
        <topology evidence="1">Multi-pass membrane protein</topology>
    </subcellularLocation>
</comment>
<comment type="subcellular location">
    <molecule>Isoform 4</molecule>
    <subcellularLocation>
        <location evidence="5">Cytoplasm</location>
    </subcellularLocation>
</comment>
<comment type="alternative products">
    <event type="alternative splicing"/>
    <isoform>
        <id>Q6XPS3-1</id>
        <name>1</name>
        <name>TPIP gamma</name>
        <sequence type="displayed"/>
    </isoform>
    <isoform>
        <id>Q6XPS3-2</id>
        <name>2</name>
        <sequence type="described" ref="VSP_017324"/>
    </isoform>
    <isoform>
        <id>Q6XPS3-3</id>
        <name>3</name>
        <name>TPIP alpha</name>
        <sequence type="described" ref="VSP_017323 VSP_017324"/>
    </isoform>
    <isoform>
        <id>Q6XPS3-4</id>
        <name>4</name>
        <name>TPIP beta</name>
        <sequence type="described" ref="VSP_017322 VSP_017325"/>
    </isoform>
    <isoform>
        <id>Q6XPS3-5</id>
        <name>5</name>
        <sequence type="described" ref="VSP_044506"/>
    </isoform>
    <isoform>
        <id>Q6XPS3-6</id>
        <name>6</name>
        <name>TPIP-C2</name>
        <sequence type="described" ref="VSP_047569"/>
    </isoform>
    <isoform>
        <id>Q6XPS3-7</id>
        <name>7</name>
        <sequence type="described" ref="VSP_053978"/>
    </isoform>
</comment>
<comment type="tissue specificity">
    <text evidence="5">Isoform 3 is expressed in testis, brain and stomach while isoform 4 seems to be testis-specific.</text>
</comment>
<comment type="miscellaneous">
    <molecule>Isoform 6</molecule>
    <text evidence="14">Expressed in testis, strongly inhibits cell growth in HeLa cells.</text>
</comment>
<name>TPTE2_HUMAN</name>
<dbReference type="EC" id="3.1.3.67" evidence="5"/>
<dbReference type="EMBL" id="AJ421032">
    <property type="protein sequence ID" value="CAD13144.1"/>
    <property type="molecule type" value="mRNA"/>
</dbReference>
<dbReference type="EMBL" id="AJ421033">
    <property type="protein sequence ID" value="CAD13145.1"/>
    <property type="molecule type" value="mRNA"/>
</dbReference>
<dbReference type="EMBL" id="AY219890">
    <property type="protein sequence ID" value="AAP45146.1"/>
    <property type="molecule type" value="mRNA"/>
</dbReference>
<dbReference type="EMBL" id="FJ969729">
    <property type="protein sequence ID" value="ACT21090.1"/>
    <property type="molecule type" value="mRNA"/>
</dbReference>
<dbReference type="EMBL" id="AK301741">
    <property type="protein sequence ID" value="BAG63204.1"/>
    <property type="molecule type" value="mRNA"/>
</dbReference>
<dbReference type="EMBL" id="AL590076">
    <property type="status" value="NOT_ANNOTATED_CDS"/>
    <property type="molecule type" value="Genomic_DNA"/>
</dbReference>
<dbReference type="EMBL" id="CH471075">
    <property type="protein sequence ID" value="EAX08219.1"/>
    <property type="molecule type" value="Genomic_DNA"/>
</dbReference>
<dbReference type="EMBL" id="BC128146">
    <property type="protein sequence ID" value="AAI28147.1"/>
    <property type="molecule type" value="mRNA"/>
</dbReference>
<dbReference type="EMBL" id="BC128147">
    <property type="protein sequence ID" value="AAI28148.1"/>
    <property type="molecule type" value="mRNA"/>
</dbReference>
<dbReference type="CCDS" id="CCDS45013.1">
    <molecule id="Q6XPS3-5"/>
</dbReference>
<dbReference type="CCDS" id="CCDS45014.1">
    <molecule id="Q6XPS3-1"/>
</dbReference>
<dbReference type="CCDS" id="CCDS9285.1">
    <molecule id="Q6XPS3-3"/>
</dbReference>
<dbReference type="RefSeq" id="NP_001135440.1">
    <molecule id="Q6XPS3-5"/>
    <property type="nucleotide sequence ID" value="NM_001141968.2"/>
</dbReference>
<dbReference type="RefSeq" id="NP_001258779.1">
    <molecule id="Q6XPS3-6"/>
    <property type="nucleotide sequence ID" value="NM_001271850.2"/>
</dbReference>
<dbReference type="RefSeq" id="NP_001382907.1">
    <molecule id="Q6XPS3-1"/>
    <property type="nucleotide sequence ID" value="NM_001395978.1"/>
</dbReference>
<dbReference type="RefSeq" id="NP_570141.3">
    <molecule id="Q6XPS3-3"/>
    <property type="nucleotide sequence ID" value="NM_130785.3"/>
</dbReference>
<dbReference type="RefSeq" id="NP_954863.2">
    <molecule id="Q6XPS3-1"/>
    <property type="nucleotide sequence ID" value="NM_199254.3"/>
</dbReference>
<dbReference type="SMR" id="Q6XPS3"/>
<dbReference type="BioGRID" id="125031">
    <property type="interactions" value="87"/>
</dbReference>
<dbReference type="FunCoup" id="Q6XPS3">
    <property type="interactions" value="57"/>
</dbReference>
<dbReference type="IntAct" id="Q6XPS3">
    <property type="interactions" value="59"/>
</dbReference>
<dbReference type="MINT" id="Q6XPS3"/>
<dbReference type="STRING" id="9606.ENSP00000383089"/>
<dbReference type="SwissLipids" id="SLP:000000884">
    <molecule id="Q6XPS3-3"/>
</dbReference>
<dbReference type="DEPOD" id="TPTE2"/>
<dbReference type="iPTMnet" id="Q6XPS3"/>
<dbReference type="PhosphoSitePlus" id="Q6XPS3"/>
<dbReference type="BioMuta" id="TPTE2"/>
<dbReference type="DMDM" id="215273973"/>
<dbReference type="jPOST" id="Q6XPS3"/>
<dbReference type="MassIVE" id="Q6XPS3"/>
<dbReference type="PaxDb" id="9606-ENSP00000383089"/>
<dbReference type="PeptideAtlas" id="Q6XPS3"/>
<dbReference type="ProteomicsDB" id="2297"/>
<dbReference type="ProteomicsDB" id="67806">
    <molecule id="Q6XPS3-1"/>
</dbReference>
<dbReference type="ProteomicsDB" id="67807">
    <molecule id="Q6XPS3-2"/>
</dbReference>
<dbReference type="ProteomicsDB" id="67808">
    <molecule id="Q6XPS3-3"/>
</dbReference>
<dbReference type="ProteomicsDB" id="67809">
    <molecule id="Q6XPS3-4"/>
</dbReference>
<dbReference type="Antibodypedia" id="22226">
    <property type="antibodies" value="59 antibodies from 22 providers"/>
</dbReference>
<dbReference type="DNASU" id="93492"/>
<dbReference type="Ensembl" id="ENST00000382978.5">
    <molecule id="Q6XPS3-2"/>
    <property type="protein sequence ID" value="ENSP00000372438.1"/>
    <property type="gene ID" value="ENSG00000132958.19"/>
</dbReference>
<dbReference type="Ensembl" id="ENST00000390680.2">
    <molecule id="Q6XPS3-3"/>
    <property type="protein sequence ID" value="ENSP00000375098.2"/>
    <property type="gene ID" value="ENSG00000132958.19"/>
</dbReference>
<dbReference type="Ensembl" id="ENST00000400103.7">
    <molecule id="Q6XPS3-5"/>
    <property type="protein sequence ID" value="ENSP00000382974.2"/>
    <property type="gene ID" value="ENSG00000132958.19"/>
</dbReference>
<dbReference type="Ensembl" id="ENST00000696858.2">
    <molecule id="Q6XPS3-1"/>
    <property type="protein sequence ID" value="ENSP00000512931.1"/>
    <property type="gene ID" value="ENSG00000132958.19"/>
</dbReference>
<dbReference type="Ensembl" id="ENST00000696988.1">
    <molecule id="Q6XPS3-1"/>
    <property type="protein sequence ID" value="ENSP00000513024.1"/>
    <property type="gene ID" value="ENSG00000132958.19"/>
</dbReference>
<dbReference type="Ensembl" id="ENST00000697147.1">
    <molecule id="Q6XPS3-1"/>
    <property type="protein sequence ID" value="ENSP00000513136.1"/>
    <property type="gene ID" value="ENSG00000132958.19"/>
</dbReference>
<dbReference type="GeneID" id="93492"/>
<dbReference type="KEGG" id="hsa:93492"/>
<dbReference type="MANE-Select" id="ENST00000697147.1">
    <property type="protein sequence ID" value="ENSP00000513136.1"/>
    <property type="RefSeq nucleotide sequence ID" value="NM_001395978.1"/>
    <property type="RefSeq protein sequence ID" value="NP_001382907.1"/>
</dbReference>
<dbReference type="UCSC" id="uc001ume.4">
    <molecule id="Q6XPS3-1"/>
    <property type="organism name" value="human"/>
</dbReference>
<dbReference type="AGR" id="HGNC:17299"/>
<dbReference type="CTD" id="93492"/>
<dbReference type="DisGeNET" id="93492"/>
<dbReference type="GeneCards" id="TPTE2"/>
<dbReference type="HGNC" id="HGNC:17299">
    <property type="gene designation" value="TPTE2"/>
</dbReference>
<dbReference type="HPA" id="ENSG00000132958">
    <property type="expression patterns" value="Tissue enriched (testis)"/>
</dbReference>
<dbReference type="MIM" id="606791">
    <property type="type" value="gene"/>
</dbReference>
<dbReference type="neXtProt" id="NX_Q6XPS3"/>
<dbReference type="OpenTargets" id="ENSG00000132958"/>
<dbReference type="PharmGKB" id="PA134917664"/>
<dbReference type="VEuPathDB" id="HostDB:ENSG00000132958"/>
<dbReference type="eggNOG" id="KOG2283">
    <property type="taxonomic scope" value="Eukaryota"/>
</dbReference>
<dbReference type="GeneTree" id="ENSGT00940000154335"/>
<dbReference type="HOGENOM" id="CLU_020105_3_0_1"/>
<dbReference type="InParanoid" id="Q6XPS3"/>
<dbReference type="OMA" id="ISPCVMS"/>
<dbReference type="OrthoDB" id="9527935at2759"/>
<dbReference type="PAN-GO" id="Q6XPS3">
    <property type="GO annotations" value="12 GO annotations based on evolutionary models"/>
</dbReference>
<dbReference type="PhylomeDB" id="Q6XPS3"/>
<dbReference type="TreeFam" id="TF354329"/>
<dbReference type="PathwayCommons" id="Q6XPS3"/>
<dbReference type="Reactome" id="R-HSA-1660514">
    <property type="pathway name" value="Synthesis of PIPs at the Golgi membrane"/>
</dbReference>
<dbReference type="SignaLink" id="Q6XPS3"/>
<dbReference type="BioGRID-ORCS" id="93492">
    <property type="hits" value="27 hits in 1109 CRISPR screens"/>
</dbReference>
<dbReference type="CD-CODE" id="91857CE7">
    <property type="entry name" value="Nucleolus"/>
</dbReference>
<dbReference type="ChiTaRS" id="TPTE2">
    <property type="organism name" value="human"/>
</dbReference>
<dbReference type="GenomeRNAi" id="93492"/>
<dbReference type="Pharos" id="Q6XPS3">
    <property type="development level" value="Tbio"/>
</dbReference>
<dbReference type="PRO" id="PR:Q6XPS3"/>
<dbReference type="Proteomes" id="UP000005640">
    <property type="component" value="Chromosome 13"/>
</dbReference>
<dbReference type="RNAct" id="Q6XPS3">
    <property type="molecule type" value="protein"/>
</dbReference>
<dbReference type="Bgee" id="ENSG00000132958">
    <property type="expression patterns" value="Expressed in male germ line stem cell (sensu Vertebrata) in testis and 88 other cell types or tissues"/>
</dbReference>
<dbReference type="ExpressionAtlas" id="Q6XPS3">
    <property type="expression patterns" value="baseline and differential"/>
</dbReference>
<dbReference type="GO" id="GO:0005737">
    <property type="term" value="C:cytoplasm"/>
    <property type="evidence" value="ECO:0000314"/>
    <property type="project" value="UniProtKB"/>
</dbReference>
<dbReference type="GO" id="GO:0005829">
    <property type="term" value="C:cytosol"/>
    <property type="evidence" value="ECO:0000318"/>
    <property type="project" value="GO_Central"/>
</dbReference>
<dbReference type="GO" id="GO:0005789">
    <property type="term" value="C:endoplasmic reticulum membrane"/>
    <property type="evidence" value="ECO:0000314"/>
    <property type="project" value="UniProtKB"/>
</dbReference>
<dbReference type="GO" id="GO:0000139">
    <property type="term" value="C:Golgi membrane"/>
    <property type="evidence" value="ECO:0000304"/>
    <property type="project" value="Reactome"/>
</dbReference>
<dbReference type="GO" id="GO:0005216">
    <property type="term" value="F:monoatomic ion channel activity"/>
    <property type="evidence" value="ECO:0007669"/>
    <property type="project" value="InterPro"/>
</dbReference>
<dbReference type="GO" id="GO:0016314">
    <property type="term" value="F:phosphatidylinositol-3,4,5-trisphosphate 3-phosphatase activity"/>
    <property type="evidence" value="ECO:0000318"/>
    <property type="project" value="GO_Central"/>
</dbReference>
<dbReference type="GO" id="GO:0051800">
    <property type="term" value="F:phosphatidylinositol-3,4-bisphosphate 3-phosphatase activity"/>
    <property type="evidence" value="ECO:0000304"/>
    <property type="project" value="Reactome"/>
</dbReference>
<dbReference type="GO" id="GO:0006661">
    <property type="term" value="P:phosphatidylinositol biosynthetic process"/>
    <property type="evidence" value="ECO:0000304"/>
    <property type="project" value="Reactome"/>
</dbReference>
<dbReference type="CDD" id="cd14510">
    <property type="entry name" value="PTP_VSP_TPTE"/>
    <property type="match status" value="1"/>
</dbReference>
<dbReference type="FunFam" id="3.90.190.10:FF:000053">
    <property type="entry name" value="Phosphatidylinositol 3,4,5-trisphosphate 3-phosphatase TPTE2"/>
    <property type="match status" value="1"/>
</dbReference>
<dbReference type="FunFam" id="1.20.120.350:FF:000067">
    <property type="entry name" value="Transmembrane phosphatase with tensin homology"/>
    <property type="match status" value="1"/>
</dbReference>
<dbReference type="FunFam" id="2.60.40.1110:FF:000004">
    <property type="entry name" value="Voltage-sensor containing phosphatase"/>
    <property type="match status" value="1"/>
</dbReference>
<dbReference type="Gene3D" id="2.60.40.1110">
    <property type="match status" value="1"/>
</dbReference>
<dbReference type="Gene3D" id="3.90.190.10">
    <property type="entry name" value="Protein tyrosine phosphatase superfamily"/>
    <property type="match status" value="1"/>
</dbReference>
<dbReference type="Gene3D" id="1.20.120.350">
    <property type="entry name" value="Voltage-gated potassium channels. Chain C"/>
    <property type="match status" value="1"/>
</dbReference>
<dbReference type="InterPro" id="IPR035892">
    <property type="entry name" value="C2_domain_sf"/>
</dbReference>
<dbReference type="InterPro" id="IPR051281">
    <property type="entry name" value="Dual-spec_lipid-protein_phosph"/>
</dbReference>
<dbReference type="InterPro" id="IPR005821">
    <property type="entry name" value="Ion_trans_dom"/>
</dbReference>
<dbReference type="InterPro" id="IPR029021">
    <property type="entry name" value="Prot-tyrosine_phosphatase-like"/>
</dbReference>
<dbReference type="InterPro" id="IPR057023">
    <property type="entry name" value="PTP-SAK"/>
</dbReference>
<dbReference type="InterPro" id="IPR045102">
    <property type="entry name" value="PTP_VSP_TPTE"/>
</dbReference>
<dbReference type="InterPro" id="IPR014020">
    <property type="entry name" value="Tensin_C2-dom"/>
</dbReference>
<dbReference type="InterPro" id="IPR029023">
    <property type="entry name" value="Tensin_phosphatase"/>
</dbReference>
<dbReference type="InterPro" id="IPR016130">
    <property type="entry name" value="Tyr_Pase_AS"/>
</dbReference>
<dbReference type="InterPro" id="IPR000387">
    <property type="entry name" value="Tyr_Pase_dom"/>
</dbReference>
<dbReference type="InterPro" id="IPR027359">
    <property type="entry name" value="Volt_channel_dom_sf"/>
</dbReference>
<dbReference type="PANTHER" id="PTHR12305">
    <property type="entry name" value="PHOSPHATASE WITH HOMOLOGY TO TENSIN"/>
    <property type="match status" value="1"/>
</dbReference>
<dbReference type="PANTHER" id="PTHR12305:SF60">
    <property type="entry name" value="PHOSPHATIDYLINOSITOL 3,4,5-TRISPHOSPHATE 3-PHOSPHATASE TPTE2-RELATED"/>
    <property type="match status" value="1"/>
</dbReference>
<dbReference type="Pfam" id="PF00520">
    <property type="entry name" value="Ion_trans"/>
    <property type="match status" value="1"/>
</dbReference>
<dbReference type="Pfam" id="PF10409">
    <property type="entry name" value="PTEN_C2"/>
    <property type="match status" value="1"/>
</dbReference>
<dbReference type="Pfam" id="PF22784">
    <property type="entry name" value="PTP-SAK"/>
    <property type="match status" value="1"/>
</dbReference>
<dbReference type="SMART" id="SM01326">
    <property type="entry name" value="PTEN_C2"/>
    <property type="match status" value="1"/>
</dbReference>
<dbReference type="SUPFAM" id="SSF52799">
    <property type="entry name" value="(Phosphotyrosine protein) phosphatases II"/>
    <property type="match status" value="1"/>
</dbReference>
<dbReference type="SUPFAM" id="SSF49562">
    <property type="entry name" value="C2 domain (Calcium/lipid-binding domain, CaLB)"/>
    <property type="match status" value="1"/>
</dbReference>
<dbReference type="SUPFAM" id="SSF81324">
    <property type="entry name" value="Voltage-gated potassium channels"/>
    <property type="match status" value="1"/>
</dbReference>
<dbReference type="PROSITE" id="PS51182">
    <property type="entry name" value="C2_TENSIN"/>
    <property type="match status" value="1"/>
</dbReference>
<dbReference type="PROSITE" id="PS51181">
    <property type="entry name" value="PPASE_TENSIN"/>
    <property type="match status" value="1"/>
</dbReference>